<keyword id="KW-0028">Amino-acid biosynthesis</keyword>
<keyword id="KW-0963">Cytoplasm</keyword>
<keyword id="KW-0368">Histidine biosynthesis</keyword>
<keyword id="KW-0378">Hydrolase</keyword>
<keyword id="KW-0460">Magnesium</keyword>
<keyword id="KW-0479">Metal-binding</keyword>
<keyword id="KW-0862">Zinc</keyword>
<name>HIS3_BORPD</name>
<evidence type="ECO:0000255" key="1">
    <source>
        <dbReference type="HAMAP-Rule" id="MF_01021"/>
    </source>
</evidence>
<organism>
    <name type="scientific">Bordetella petrii (strain ATCC BAA-461 / DSM 12804 / CCUG 43448)</name>
    <dbReference type="NCBI Taxonomy" id="340100"/>
    <lineage>
        <taxon>Bacteria</taxon>
        <taxon>Pseudomonadati</taxon>
        <taxon>Pseudomonadota</taxon>
        <taxon>Betaproteobacteria</taxon>
        <taxon>Burkholderiales</taxon>
        <taxon>Alcaligenaceae</taxon>
        <taxon>Bordetella</taxon>
    </lineage>
</organism>
<gene>
    <name evidence="1" type="primary">hisI</name>
    <name type="ordered locus">Bpet0132</name>
</gene>
<accession>A9HWB8</accession>
<dbReference type="EC" id="3.5.4.19" evidence="1"/>
<dbReference type="EMBL" id="AM902716">
    <property type="protein sequence ID" value="CAP40463.1"/>
    <property type="molecule type" value="Genomic_DNA"/>
</dbReference>
<dbReference type="SMR" id="A9HWB8"/>
<dbReference type="STRING" id="94624.Bpet0132"/>
<dbReference type="KEGG" id="bpt:Bpet0132"/>
<dbReference type="eggNOG" id="COG0139">
    <property type="taxonomic scope" value="Bacteria"/>
</dbReference>
<dbReference type="UniPathway" id="UPA00031">
    <property type="reaction ID" value="UER00008"/>
</dbReference>
<dbReference type="Proteomes" id="UP000001225">
    <property type="component" value="Chromosome"/>
</dbReference>
<dbReference type="GO" id="GO:0005737">
    <property type="term" value="C:cytoplasm"/>
    <property type="evidence" value="ECO:0007669"/>
    <property type="project" value="UniProtKB-SubCell"/>
</dbReference>
<dbReference type="GO" id="GO:0000287">
    <property type="term" value="F:magnesium ion binding"/>
    <property type="evidence" value="ECO:0007669"/>
    <property type="project" value="UniProtKB-UniRule"/>
</dbReference>
<dbReference type="GO" id="GO:0004635">
    <property type="term" value="F:phosphoribosyl-AMP cyclohydrolase activity"/>
    <property type="evidence" value="ECO:0007669"/>
    <property type="project" value="UniProtKB-UniRule"/>
</dbReference>
<dbReference type="GO" id="GO:0008270">
    <property type="term" value="F:zinc ion binding"/>
    <property type="evidence" value="ECO:0007669"/>
    <property type="project" value="UniProtKB-UniRule"/>
</dbReference>
<dbReference type="GO" id="GO:0000105">
    <property type="term" value="P:L-histidine biosynthetic process"/>
    <property type="evidence" value="ECO:0007669"/>
    <property type="project" value="UniProtKB-UniRule"/>
</dbReference>
<dbReference type="FunFam" id="3.10.20.810:FF:000001">
    <property type="entry name" value="Histidine biosynthesis bifunctional protein HisIE"/>
    <property type="match status" value="1"/>
</dbReference>
<dbReference type="Gene3D" id="3.10.20.810">
    <property type="entry name" value="Phosphoribosyl-AMP cyclohydrolase"/>
    <property type="match status" value="1"/>
</dbReference>
<dbReference type="HAMAP" id="MF_01021">
    <property type="entry name" value="HisI"/>
    <property type="match status" value="1"/>
</dbReference>
<dbReference type="InterPro" id="IPR026660">
    <property type="entry name" value="PRA-CH"/>
</dbReference>
<dbReference type="InterPro" id="IPR002496">
    <property type="entry name" value="PRib_AMP_CycHydrolase_dom"/>
</dbReference>
<dbReference type="InterPro" id="IPR038019">
    <property type="entry name" value="PRib_AMP_CycHydrolase_sf"/>
</dbReference>
<dbReference type="NCBIfam" id="NF000768">
    <property type="entry name" value="PRK00051.1"/>
    <property type="match status" value="1"/>
</dbReference>
<dbReference type="PANTHER" id="PTHR42945">
    <property type="entry name" value="HISTIDINE BIOSYNTHESIS BIFUNCTIONAL PROTEIN"/>
    <property type="match status" value="1"/>
</dbReference>
<dbReference type="PANTHER" id="PTHR42945:SF1">
    <property type="entry name" value="HISTIDINE BIOSYNTHESIS BIFUNCTIONAL PROTEIN HIS7"/>
    <property type="match status" value="1"/>
</dbReference>
<dbReference type="Pfam" id="PF01502">
    <property type="entry name" value="PRA-CH"/>
    <property type="match status" value="1"/>
</dbReference>
<dbReference type="SUPFAM" id="SSF141734">
    <property type="entry name" value="HisI-like"/>
    <property type="match status" value="1"/>
</dbReference>
<proteinExistence type="inferred from homology"/>
<comment type="function">
    <text evidence="1">Catalyzes the hydrolysis of the adenine ring of phosphoribosyl-AMP.</text>
</comment>
<comment type="catalytic activity">
    <reaction evidence="1">
        <text>1-(5-phospho-beta-D-ribosyl)-5'-AMP + H2O = 1-(5-phospho-beta-D-ribosyl)-5-[(5-phospho-beta-D-ribosylamino)methylideneamino]imidazole-4-carboxamide</text>
        <dbReference type="Rhea" id="RHEA:20049"/>
        <dbReference type="ChEBI" id="CHEBI:15377"/>
        <dbReference type="ChEBI" id="CHEBI:58435"/>
        <dbReference type="ChEBI" id="CHEBI:59457"/>
        <dbReference type="EC" id="3.5.4.19"/>
    </reaction>
</comment>
<comment type="cofactor">
    <cofactor evidence="1">
        <name>Mg(2+)</name>
        <dbReference type="ChEBI" id="CHEBI:18420"/>
    </cofactor>
    <text evidence="1">Binds 1 Mg(2+) ion per subunit.</text>
</comment>
<comment type="cofactor">
    <cofactor evidence="1">
        <name>Zn(2+)</name>
        <dbReference type="ChEBI" id="CHEBI:29105"/>
    </cofactor>
    <text evidence="1">Binds 1 zinc ion per subunit.</text>
</comment>
<comment type="pathway">
    <text evidence="1">Amino-acid biosynthesis; L-histidine biosynthesis; L-histidine from 5-phospho-alpha-D-ribose 1-diphosphate: step 3/9.</text>
</comment>
<comment type="subunit">
    <text evidence="1">Homodimer.</text>
</comment>
<comment type="subcellular location">
    <subcellularLocation>
        <location evidence="1">Cytoplasm</location>
    </subcellularLocation>
</comment>
<comment type="similarity">
    <text evidence="1">Belongs to the PRA-CH family.</text>
</comment>
<reference key="1">
    <citation type="journal article" date="2008" name="BMC Genomics">
        <title>The missing link: Bordetella petrii is endowed with both the metabolic versatility of environmental bacteria and virulence traits of pathogenic Bordetellae.</title>
        <authorList>
            <person name="Gross R."/>
            <person name="Guzman C.A."/>
            <person name="Sebaihia M."/>
            <person name="Martin dos Santos V.A.P."/>
            <person name="Pieper D.H."/>
            <person name="Koebnik R."/>
            <person name="Lechner M."/>
            <person name="Bartels D."/>
            <person name="Buhrmester J."/>
            <person name="Choudhuri J.V."/>
            <person name="Ebensen T."/>
            <person name="Gaigalat L."/>
            <person name="Herrmann S."/>
            <person name="Khachane A.N."/>
            <person name="Larisch C."/>
            <person name="Link S."/>
            <person name="Linke B."/>
            <person name="Meyer F."/>
            <person name="Mormann S."/>
            <person name="Nakunst D."/>
            <person name="Rueckert C."/>
            <person name="Schneiker-Bekel S."/>
            <person name="Schulze K."/>
            <person name="Voerholter F.-J."/>
            <person name="Yevsa T."/>
            <person name="Engle J.T."/>
            <person name="Goldman W.E."/>
            <person name="Puehler A."/>
            <person name="Goebel U.B."/>
            <person name="Goesmann A."/>
            <person name="Bloecker H."/>
            <person name="Kaiser O."/>
            <person name="Martinez-Arias R."/>
        </authorList>
    </citation>
    <scope>NUCLEOTIDE SEQUENCE [LARGE SCALE GENOMIC DNA]</scope>
    <source>
        <strain>ATCC BAA-461 / DSM 12804 / CCUG 43448</strain>
    </source>
</reference>
<protein>
    <recommendedName>
        <fullName evidence="1">Phosphoribosyl-AMP cyclohydrolase</fullName>
        <shortName evidence="1">PRA-CH</shortName>
        <ecNumber evidence="1">3.5.4.19</ecNumber>
    </recommendedName>
</protein>
<feature type="chain" id="PRO_1000135335" description="Phosphoribosyl-AMP cyclohydrolase">
    <location>
        <begin position="1"/>
        <end position="134"/>
    </location>
</feature>
<feature type="binding site" evidence="1">
    <location>
        <position position="80"/>
    </location>
    <ligand>
        <name>Mg(2+)</name>
        <dbReference type="ChEBI" id="CHEBI:18420"/>
    </ligand>
</feature>
<feature type="binding site" evidence="1">
    <location>
        <position position="81"/>
    </location>
    <ligand>
        <name>Zn(2+)</name>
        <dbReference type="ChEBI" id="CHEBI:29105"/>
        <note>ligand shared between dimeric partners</note>
    </ligand>
</feature>
<feature type="binding site" evidence="1">
    <location>
        <position position="82"/>
    </location>
    <ligand>
        <name>Mg(2+)</name>
        <dbReference type="ChEBI" id="CHEBI:18420"/>
    </ligand>
</feature>
<feature type="binding site" evidence="1">
    <location>
        <position position="84"/>
    </location>
    <ligand>
        <name>Mg(2+)</name>
        <dbReference type="ChEBI" id="CHEBI:18420"/>
    </ligand>
</feature>
<feature type="binding site" evidence="1">
    <location>
        <position position="98"/>
    </location>
    <ligand>
        <name>Zn(2+)</name>
        <dbReference type="ChEBI" id="CHEBI:29105"/>
        <note>ligand shared between dimeric partners</note>
    </ligand>
</feature>
<feature type="binding site" evidence="1">
    <location>
        <position position="105"/>
    </location>
    <ligand>
        <name>Zn(2+)</name>
        <dbReference type="ChEBI" id="CHEBI:29105"/>
        <note>ligand shared between dimeric partners</note>
    </ligand>
</feature>
<sequence>MNTDPAWMADVAFDDNGLIPAIAQDAENGQILMVAWMNREALAETAATGRAVYWSRSRQRLWRKGEESGHTQTVHDLRLDCDGDVVLLKVHQEGGIACHTGRASCFFRRLEGPAGSASWVTVDPVLKDPEHIYK</sequence>